<evidence type="ECO:0000250" key="1">
    <source>
        <dbReference type="UniProtKB" id="P00403"/>
    </source>
</evidence>
<evidence type="ECO:0000250" key="2">
    <source>
        <dbReference type="UniProtKB" id="P00410"/>
    </source>
</evidence>
<evidence type="ECO:0000250" key="3">
    <source>
        <dbReference type="UniProtKB" id="P68530"/>
    </source>
</evidence>
<evidence type="ECO:0000305" key="4"/>
<dbReference type="EC" id="7.1.1.9"/>
<dbReference type="EMBL" id="AJ010957">
    <property type="protein sequence ID" value="CAA09431.1"/>
    <property type="molecule type" value="Genomic_DNA"/>
</dbReference>
<dbReference type="RefSeq" id="NP_008793.1">
    <property type="nucleotide sequence ID" value="NC_000889.1"/>
</dbReference>
<dbReference type="SMR" id="Q9ZZY8"/>
<dbReference type="GeneID" id="808679"/>
<dbReference type="CTD" id="4513"/>
<dbReference type="GO" id="GO:0005743">
    <property type="term" value="C:mitochondrial inner membrane"/>
    <property type="evidence" value="ECO:0007669"/>
    <property type="project" value="UniProtKB-SubCell"/>
</dbReference>
<dbReference type="GO" id="GO:0045277">
    <property type="term" value="C:respiratory chain complex IV"/>
    <property type="evidence" value="ECO:0000250"/>
    <property type="project" value="UniProtKB"/>
</dbReference>
<dbReference type="GO" id="GO:0005507">
    <property type="term" value="F:copper ion binding"/>
    <property type="evidence" value="ECO:0007669"/>
    <property type="project" value="InterPro"/>
</dbReference>
<dbReference type="GO" id="GO:0004129">
    <property type="term" value="F:cytochrome-c oxidase activity"/>
    <property type="evidence" value="ECO:0007669"/>
    <property type="project" value="UniProtKB-EC"/>
</dbReference>
<dbReference type="GO" id="GO:0042773">
    <property type="term" value="P:ATP synthesis coupled electron transport"/>
    <property type="evidence" value="ECO:0007669"/>
    <property type="project" value="TreeGrafter"/>
</dbReference>
<dbReference type="CDD" id="cd13912">
    <property type="entry name" value="CcO_II_C"/>
    <property type="match status" value="1"/>
</dbReference>
<dbReference type="FunFam" id="1.10.287.90:FF:000001">
    <property type="entry name" value="Cytochrome c oxidase subunit 2"/>
    <property type="match status" value="1"/>
</dbReference>
<dbReference type="FunFam" id="2.60.40.420:FF:000001">
    <property type="entry name" value="Cytochrome c oxidase subunit 2"/>
    <property type="match status" value="1"/>
</dbReference>
<dbReference type="Gene3D" id="1.10.287.90">
    <property type="match status" value="1"/>
</dbReference>
<dbReference type="Gene3D" id="2.60.40.420">
    <property type="entry name" value="Cupredoxins - blue copper proteins"/>
    <property type="match status" value="1"/>
</dbReference>
<dbReference type="InterPro" id="IPR045187">
    <property type="entry name" value="CcO_II"/>
</dbReference>
<dbReference type="InterPro" id="IPR002429">
    <property type="entry name" value="CcO_II-like_C"/>
</dbReference>
<dbReference type="InterPro" id="IPR034210">
    <property type="entry name" value="CcO_II_C"/>
</dbReference>
<dbReference type="InterPro" id="IPR001505">
    <property type="entry name" value="Copper_CuA"/>
</dbReference>
<dbReference type="InterPro" id="IPR008972">
    <property type="entry name" value="Cupredoxin"/>
</dbReference>
<dbReference type="InterPro" id="IPR014222">
    <property type="entry name" value="Cyt_c_oxidase_su2"/>
</dbReference>
<dbReference type="InterPro" id="IPR011759">
    <property type="entry name" value="Cyt_c_oxidase_su2_TM_dom"/>
</dbReference>
<dbReference type="InterPro" id="IPR036257">
    <property type="entry name" value="Cyt_c_oxidase_su2_TM_sf"/>
</dbReference>
<dbReference type="NCBIfam" id="TIGR02866">
    <property type="entry name" value="CoxB"/>
    <property type="match status" value="1"/>
</dbReference>
<dbReference type="PANTHER" id="PTHR22888:SF9">
    <property type="entry name" value="CYTOCHROME C OXIDASE SUBUNIT 2"/>
    <property type="match status" value="1"/>
</dbReference>
<dbReference type="PANTHER" id="PTHR22888">
    <property type="entry name" value="CYTOCHROME C OXIDASE, SUBUNIT II"/>
    <property type="match status" value="1"/>
</dbReference>
<dbReference type="Pfam" id="PF00116">
    <property type="entry name" value="COX2"/>
    <property type="match status" value="1"/>
</dbReference>
<dbReference type="Pfam" id="PF02790">
    <property type="entry name" value="COX2_TM"/>
    <property type="match status" value="1"/>
</dbReference>
<dbReference type="PRINTS" id="PR01166">
    <property type="entry name" value="CYCOXIDASEII"/>
</dbReference>
<dbReference type="SUPFAM" id="SSF49503">
    <property type="entry name" value="Cupredoxins"/>
    <property type="match status" value="1"/>
</dbReference>
<dbReference type="SUPFAM" id="SSF81464">
    <property type="entry name" value="Cytochrome c oxidase subunit II-like, transmembrane region"/>
    <property type="match status" value="1"/>
</dbReference>
<dbReference type="PROSITE" id="PS00078">
    <property type="entry name" value="COX2"/>
    <property type="match status" value="1"/>
</dbReference>
<dbReference type="PROSITE" id="PS50857">
    <property type="entry name" value="COX2_CUA"/>
    <property type="match status" value="1"/>
</dbReference>
<dbReference type="PROSITE" id="PS50999">
    <property type="entry name" value="COX2_TM"/>
    <property type="match status" value="1"/>
</dbReference>
<keyword id="KW-0186">Copper</keyword>
<keyword id="KW-0249">Electron transport</keyword>
<keyword id="KW-0460">Magnesium</keyword>
<keyword id="KW-0472">Membrane</keyword>
<keyword id="KW-0479">Metal-binding</keyword>
<keyword id="KW-0496">Mitochondrion</keyword>
<keyword id="KW-0999">Mitochondrion inner membrane</keyword>
<keyword id="KW-0679">Respiratory chain</keyword>
<keyword id="KW-1278">Translocase</keyword>
<keyword id="KW-0812">Transmembrane</keyword>
<keyword id="KW-1133">Transmembrane helix</keyword>
<keyword id="KW-0813">Transport</keyword>
<sequence>MAYPLQLGFQDAVSPIMEELLYFHDHTLMIVFLISSLVLYIITLMLTTKLTHTNTMNAQEVETVWTILPAIILILIALPSLRILYMMDEINNPSLTVKTMGHQWYWSYEYTDYEDLNFDSYMVPTSDLKPGDLRLLEVDNRVVLPMDVTVRMLISSEDVLHSWAVPSLGLKTDAIPGRLNQTTLMSTRPGLFYGQCSEICGSNHSFMPIVLELVPLQTFEKWTASLL</sequence>
<accession>Q9ZZY8</accession>
<organism>
    <name type="scientific">Hippopotamus amphibius</name>
    <name type="common">Hippopotamus</name>
    <dbReference type="NCBI Taxonomy" id="9833"/>
    <lineage>
        <taxon>Eukaryota</taxon>
        <taxon>Metazoa</taxon>
        <taxon>Chordata</taxon>
        <taxon>Craniata</taxon>
        <taxon>Vertebrata</taxon>
        <taxon>Euteleostomi</taxon>
        <taxon>Mammalia</taxon>
        <taxon>Eutheria</taxon>
        <taxon>Laurasiatheria</taxon>
        <taxon>Artiodactyla</taxon>
        <taxon>Whippomorpha</taxon>
        <taxon>Ancodonta</taxon>
        <taxon>Hippopotamidae</taxon>
        <taxon>Hippopotamus</taxon>
    </lineage>
</organism>
<reference key="1">
    <citation type="journal article" date="1998" name="Proc. R. Soc. B">
        <title>Analyses of mitochondrial genomes strongly support a hippopotamus-whale clade.</title>
        <authorList>
            <person name="Ursing B.M."/>
            <person name="Arnason U."/>
        </authorList>
    </citation>
    <scope>NUCLEOTIDE SEQUENCE [GENOMIC DNA]</scope>
</reference>
<proteinExistence type="inferred from homology"/>
<gene>
    <name type="primary">MT-CO2</name>
    <name type="synonym">COII</name>
    <name type="synonym">COX2</name>
    <name type="synonym">COXII</name>
    <name type="synonym">MTCO2</name>
</gene>
<comment type="function">
    <text evidence="2">Component of the cytochrome c oxidase, the last enzyme in the mitochondrial electron transport chain which drives oxidative phosphorylation. The respiratory chain contains 3 multisubunit complexes succinate dehydrogenase (complex II, CII), ubiquinol-cytochrome c oxidoreductase (cytochrome b-c1 complex, complex III, CIII) and cytochrome c oxidase (complex IV, CIV), that cooperate to transfer electrons derived from NADH and succinate to molecular oxygen, creating an electrochemical gradient over the inner membrane that drives transmembrane transport and the ATP synthase. Cytochrome c oxidase is the component of the respiratory chain that catalyzes the reduction of oxygen to water. Electrons originating from reduced cytochrome c in the intermembrane space (IMS) are transferred via the dinuclear copper A center (CU(A)) of subunit 2 and heme A of subunit 1 to the active site in subunit 1, a binuclear center (BNC) formed by heme A3 and copper B (CU(B)). The BNC reduces molecular oxygen to 2 water molecules using 4 electrons from cytochrome c in the IMS and 4 protons from the mitochondrial matrix.</text>
</comment>
<comment type="catalytic activity">
    <reaction evidence="2">
        <text>4 Fe(II)-[cytochrome c] + O2 + 8 H(+)(in) = 4 Fe(III)-[cytochrome c] + 2 H2O + 4 H(+)(out)</text>
        <dbReference type="Rhea" id="RHEA:11436"/>
        <dbReference type="Rhea" id="RHEA-COMP:10350"/>
        <dbReference type="Rhea" id="RHEA-COMP:14399"/>
        <dbReference type="ChEBI" id="CHEBI:15377"/>
        <dbReference type="ChEBI" id="CHEBI:15378"/>
        <dbReference type="ChEBI" id="CHEBI:15379"/>
        <dbReference type="ChEBI" id="CHEBI:29033"/>
        <dbReference type="ChEBI" id="CHEBI:29034"/>
        <dbReference type="EC" id="7.1.1.9"/>
    </reaction>
    <physiologicalReaction direction="left-to-right" evidence="2">
        <dbReference type="Rhea" id="RHEA:11437"/>
    </physiologicalReaction>
</comment>
<comment type="cofactor">
    <cofactor evidence="3">
        <name>Cu cation</name>
        <dbReference type="ChEBI" id="CHEBI:23378"/>
    </cofactor>
    <text evidence="3">Binds a dinuclear copper A center per subunit.</text>
</comment>
<comment type="subunit">
    <text evidence="1 3">Component of the cytochrome c oxidase (complex IV, CIV), a multisubunit enzyme composed of 14 subunits. The complex is composed of a catalytic core of 3 subunits MT-CO1, MT-CO2 and MT-CO3, encoded in the mitochondrial DNA, and 11 supernumerary subunits COX4I, COX5A, COX5B, COX6A, COX6B, COX6C, COX7A, COX7B, COX7C, COX8 and NDUFA4, which are encoded in the nuclear genome. The complex exists as a monomer or a dimer and forms supercomplexes (SCs) in the inner mitochondrial membrane with NADH-ubiquinone oxidoreductase (complex I, CI) and ubiquinol-cytochrome c oxidoreductase (cytochrome b-c1 complex, complex III, CIII), resulting in different assemblies (supercomplex SCI(1)III(2)IV(1) and megacomplex MCI(2)III(2)IV(2)) (By similarity). Found in a complex with TMEM177, COA6, COX18, COX20, SCO1 and SCO2. Interacts with TMEM177 in a COX20-dependent manner. Interacts with COX20. Interacts with COX16 (By similarity).</text>
</comment>
<comment type="subcellular location">
    <subcellularLocation>
        <location evidence="3">Mitochondrion inner membrane</location>
        <topology evidence="3">Multi-pass membrane protein</topology>
    </subcellularLocation>
</comment>
<comment type="similarity">
    <text evidence="4">Belongs to the cytochrome c oxidase subunit 2 family.</text>
</comment>
<name>COX2_HIPAM</name>
<geneLocation type="mitochondrion"/>
<feature type="chain" id="PRO_0000183608" description="Cytochrome c oxidase subunit 2">
    <location>
        <begin position="1"/>
        <end position="227"/>
    </location>
</feature>
<feature type="topological domain" description="Mitochondrial intermembrane" evidence="3">
    <location>
        <begin position="1"/>
        <end position="14"/>
    </location>
</feature>
<feature type="transmembrane region" description="Helical; Name=I" evidence="3">
    <location>
        <begin position="15"/>
        <end position="45"/>
    </location>
</feature>
<feature type="topological domain" description="Mitochondrial matrix" evidence="3">
    <location>
        <begin position="46"/>
        <end position="59"/>
    </location>
</feature>
<feature type="transmembrane region" description="Helical; Name=II" evidence="3">
    <location>
        <begin position="60"/>
        <end position="87"/>
    </location>
</feature>
<feature type="topological domain" description="Mitochondrial intermembrane" evidence="3">
    <location>
        <begin position="88"/>
        <end position="227"/>
    </location>
</feature>
<feature type="binding site" evidence="3">
    <location>
        <position position="161"/>
    </location>
    <ligand>
        <name>Cu cation</name>
        <dbReference type="ChEBI" id="CHEBI:23378"/>
        <label>A1</label>
    </ligand>
</feature>
<feature type="binding site" evidence="3">
    <location>
        <position position="196"/>
    </location>
    <ligand>
        <name>Cu cation</name>
        <dbReference type="ChEBI" id="CHEBI:23378"/>
        <label>A1</label>
    </ligand>
</feature>
<feature type="binding site" evidence="3">
    <location>
        <position position="196"/>
    </location>
    <ligand>
        <name>Cu cation</name>
        <dbReference type="ChEBI" id="CHEBI:23378"/>
        <label>A2</label>
    </ligand>
</feature>
<feature type="binding site" evidence="3">
    <location>
        <position position="198"/>
    </location>
    <ligand>
        <name>Cu cation</name>
        <dbReference type="ChEBI" id="CHEBI:23378"/>
        <label>A2</label>
    </ligand>
</feature>
<feature type="binding site" evidence="3">
    <location>
        <position position="198"/>
    </location>
    <ligand>
        <name>Mg(2+)</name>
        <dbReference type="ChEBI" id="CHEBI:18420"/>
        <note>ligand shared with MT-CO1</note>
    </ligand>
</feature>
<feature type="binding site" evidence="3">
    <location>
        <position position="200"/>
    </location>
    <ligand>
        <name>Cu cation</name>
        <dbReference type="ChEBI" id="CHEBI:23378"/>
        <label>A1</label>
    </ligand>
</feature>
<feature type="binding site" evidence="3">
    <location>
        <position position="200"/>
    </location>
    <ligand>
        <name>Cu cation</name>
        <dbReference type="ChEBI" id="CHEBI:23378"/>
        <label>A2</label>
    </ligand>
</feature>
<feature type="binding site" evidence="3">
    <location>
        <position position="204"/>
    </location>
    <ligand>
        <name>Cu cation</name>
        <dbReference type="ChEBI" id="CHEBI:23378"/>
        <label>A2</label>
    </ligand>
</feature>
<feature type="binding site" evidence="3">
    <location>
        <position position="207"/>
    </location>
    <ligand>
        <name>Cu cation</name>
        <dbReference type="ChEBI" id="CHEBI:23378"/>
        <label>A1</label>
    </ligand>
</feature>
<protein>
    <recommendedName>
        <fullName>Cytochrome c oxidase subunit 2</fullName>
        <ecNumber>7.1.1.9</ecNumber>
    </recommendedName>
    <alternativeName>
        <fullName>Cytochrome c oxidase polypeptide II</fullName>
    </alternativeName>
</protein>